<gene>
    <name evidence="2" type="primary">infB</name>
    <name type="ordered locus">Cvib_1561</name>
</gene>
<dbReference type="EMBL" id="CP000607">
    <property type="protein sequence ID" value="ABP37571.1"/>
    <property type="molecule type" value="Genomic_DNA"/>
</dbReference>
<dbReference type="SMR" id="A4SGG2"/>
<dbReference type="STRING" id="290318.Cvib_1561"/>
<dbReference type="KEGG" id="pvi:Cvib_1561"/>
<dbReference type="eggNOG" id="COG0532">
    <property type="taxonomic scope" value="Bacteria"/>
</dbReference>
<dbReference type="HOGENOM" id="CLU_006301_0_1_10"/>
<dbReference type="OrthoDB" id="9811804at2"/>
<dbReference type="GO" id="GO:0005737">
    <property type="term" value="C:cytoplasm"/>
    <property type="evidence" value="ECO:0007669"/>
    <property type="project" value="UniProtKB-SubCell"/>
</dbReference>
<dbReference type="GO" id="GO:0005525">
    <property type="term" value="F:GTP binding"/>
    <property type="evidence" value="ECO:0007669"/>
    <property type="project" value="UniProtKB-KW"/>
</dbReference>
<dbReference type="GO" id="GO:0003924">
    <property type="term" value="F:GTPase activity"/>
    <property type="evidence" value="ECO:0007669"/>
    <property type="project" value="UniProtKB-UniRule"/>
</dbReference>
<dbReference type="GO" id="GO:0003743">
    <property type="term" value="F:translation initiation factor activity"/>
    <property type="evidence" value="ECO:0007669"/>
    <property type="project" value="UniProtKB-UniRule"/>
</dbReference>
<dbReference type="CDD" id="cd01887">
    <property type="entry name" value="IF2_eIF5B"/>
    <property type="match status" value="1"/>
</dbReference>
<dbReference type="CDD" id="cd03702">
    <property type="entry name" value="IF2_mtIF2_II"/>
    <property type="match status" value="1"/>
</dbReference>
<dbReference type="CDD" id="cd03692">
    <property type="entry name" value="mtIF2_IVc"/>
    <property type="match status" value="1"/>
</dbReference>
<dbReference type="FunFam" id="2.40.30.10:FF:000008">
    <property type="entry name" value="Translation initiation factor IF-2"/>
    <property type="match status" value="1"/>
</dbReference>
<dbReference type="FunFam" id="2.40.30.10:FF:000054">
    <property type="entry name" value="Translation initiation factor IF-2"/>
    <property type="match status" value="1"/>
</dbReference>
<dbReference type="FunFam" id="3.40.50.10050:FF:000001">
    <property type="entry name" value="Translation initiation factor IF-2"/>
    <property type="match status" value="1"/>
</dbReference>
<dbReference type="FunFam" id="3.40.50.300:FF:000019">
    <property type="entry name" value="Translation initiation factor IF-2"/>
    <property type="match status" value="1"/>
</dbReference>
<dbReference type="Gene3D" id="1.10.10.2480">
    <property type="match status" value="1"/>
</dbReference>
<dbReference type="Gene3D" id="3.40.50.300">
    <property type="entry name" value="P-loop containing nucleotide triphosphate hydrolases"/>
    <property type="match status" value="1"/>
</dbReference>
<dbReference type="Gene3D" id="2.40.30.10">
    <property type="entry name" value="Translation factors"/>
    <property type="match status" value="2"/>
</dbReference>
<dbReference type="Gene3D" id="3.40.50.10050">
    <property type="entry name" value="Translation initiation factor IF- 2, domain 3"/>
    <property type="match status" value="1"/>
</dbReference>
<dbReference type="HAMAP" id="MF_00100_B">
    <property type="entry name" value="IF_2_B"/>
    <property type="match status" value="1"/>
</dbReference>
<dbReference type="InterPro" id="IPR053905">
    <property type="entry name" value="EF-G-like_DII"/>
</dbReference>
<dbReference type="InterPro" id="IPR004161">
    <property type="entry name" value="EFTu-like_2"/>
</dbReference>
<dbReference type="InterPro" id="IPR044145">
    <property type="entry name" value="IF2_II"/>
</dbReference>
<dbReference type="InterPro" id="IPR006847">
    <property type="entry name" value="IF2_N"/>
</dbReference>
<dbReference type="InterPro" id="IPR027417">
    <property type="entry name" value="P-loop_NTPase"/>
</dbReference>
<dbReference type="InterPro" id="IPR005225">
    <property type="entry name" value="Small_GTP-bd"/>
</dbReference>
<dbReference type="InterPro" id="IPR000795">
    <property type="entry name" value="T_Tr_GTP-bd_dom"/>
</dbReference>
<dbReference type="InterPro" id="IPR000178">
    <property type="entry name" value="TF_IF2_bacterial-like"/>
</dbReference>
<dbReference type="InterPro" id="IPR015760">
    <property type="entry name" value="TIF_IF2"/>
</dbReference>
<dbReference type="InterPro" id="IPR023115">
    <property type="entry name" value="TIF_IF2_dom3"/>
</dbReference>
<dbReference type="InterPro" id="IPR036925">
    <property type="entry name" value="TIF_IF2_dom3_sf"/>
</dbReference>
<dbReference type="InterPro" id="IPR009000">
    <property type="entry name" value="Transl_B-barrel_sf"/>
</dbReference>
<dbReference type="NCBIfam" id="TIGR00487">
    <property type="entry name" value="IF-2"/>
    <property type="match status" value="1"/>
</dbReference>
<dbReference type="NCBIfam" id="TIGR00231">
    <property type="entry name" value="small_GTP"/>
    <property type="match status" value="1"/>
</dbReference>
<dbReference type="PANTHER" id="PTHR43381:SF5">
    <property type="entry name" value="TR-TYPE G DOMAIN-CONTAINING PROTEIN"/>
    <property type="match status" value="1"/>
</dbReference>
<dbReference type="PANTHER" id="PTHR43381">
    <property type="entry name" value="TRANSLATION INITIATION FACTOR IF-2-RELATED"/>
    <property type="match status" value="1"/>
</dbReference>
<dbReference type="Pfam" id="PF22042">
    <property type="entry name" value="EF-G_D2"/>
    <property type="match status" value="1"/>
</dbReference>
<dbReference type="Pfam" id="PF00009">
    <property type="entry name" value="GTP_EFTU"/>
    <property type="match status" value="1"/>
</dbReference>
<dbReference type="Pfam" id="PF03144">
    <property type="entry name" value="GTP_EFTU_D2"/>
    <property type="match status" value="1"/>
</dbReference>
<dbReference type="Pfam" id="PF11987">
    <property type="entry name" value="IF-2"/>
    <property type="match status" value="1"/>
</dbReference>
<dbReference type="Pfam" id="PF04760">
    <property type="entry name" value="IF2_N"/>
    <property type="match status" value="1"/>
</dbReference>
<dbReference type="SUPFAM" id="SSF52156">
    <property type="entry name" value="Initiation factor IF2/eIF5b, domain 3"/>
    <property type="match status" value="1"/>
</dbReference>
<dbReference type="SUPFAM" id="SSF52540">
    <property type="entry name" value="P-loop containing nucleoside triphosphate hydrolases"/>
    <property type="match status" value="1"/>
</dbReference>
<dbReference type="SUPFAM" id="SSF50447">
    <property type="entry name" value="Translation proteins"/>
    <property type="match status" value="2"/>
</dbReference>
<dbReference type="PROSITE" id="PS51722">
    <property type="entry name" value="G_TR_2"/>
    <property type="match status" value="1"/>
</dbReference>
<dbReference type="PROSITE" id="PS01176">
    <property type="entry name" value="IF2"/>
    <property type="match status" value="1"/>
</dbReference>
<keyword id="KW-0963">Cytoplasm</keyword>
<keyword id="KW-0342">GTP-binding</keyword>
<keyword id="KW-0396">Initiation factor</keyword>
<keyword id="KW-0547">Nucleotide-binding</keyword>
<keyword id="KW-0648">Protein biosynthesis</keyword>
<accession>A4SGG2</accession>
<organism>
    <name type="scientific">Chlorobium phaeovibrioides (strain DSM 265 / 1930)</name>
    <name type="common">Prosthecochloris vibrioformis (strain DSM 265)</name>
    <dbReference type="NCBI Taxonomy" id="290318"/>
    <lineage>
        <taxon>Bacteria</taxon>
        <taxon>Pseudomonadati</taxon>
        <taxon>Chlorobiota</taxon>
        <taxon>Chlorobiia</taxon>
        <taxon>Chlorobiales</taxon>
        <taxon>Chlorobiaceae</taxon>
        <taxon>Chlorobium/Pelodictyon group</taxon>
        <taxon>Chlorobium</taxon>
    </lineage>
</organism>
<evidence type="ECO:0000250" key="1"/>
<evidence type="ECO:0000255" key="2">
    <source>
        <dbReference type="HAMAP-Rule" id="MF_00100"/>
    </source>
</evidence>
<evidence type="ECO:0000256" key="3">
    <source>
        <dbReference type="SAM" id="MobiDB-lite"/>
    </source>
</evidence>
<protein>
    <recommendedName>
        <fullName evidence="2">Translation initiation factor IF-2</fullName>
    </recommendedName>
</protein>
<sequence>MALEDMDKKYRISDIARELQVSPQEVLRFVKQEGARVASTSSMVDTEMHGLILGQFSDEKKMVDETRKIRAEKKQRLNRLEEQSRKTVEKEDQLRDTLQPSPVPGRVEVPVPAPIEAPVAAPVVPDAPVAPVEVVPPAPPEAPLMAEAAVEAEPEVAPPSLEAEEDSPVEAQANDQIVSYDAPKNIGGLTVLGTLDMESESDRKRRGKKKNFKESADALKDEFDTTGSVELDDDGKPKKKPGSSPLGSDLGMGKKKGKKKKKPEVDEKVISANIRSTISGMDVGAGSGSRSKFRKQRKMEREHEQEEADAFREMQQQVVRVTEYASPHELAELMSVTAKDIIQKCFTLGKFVTINQRLDKESIELIALEFGYEAEFVSEVEATEVVAEVDNEEDMDTRPPVVTIMGHVDHGKTSLLDYMRNSNVAGGESGGITQHVAAYEVTGSNGRKITFLDTPGHEAFTAMRARGAQVTDIVILVVAADDSVMPQTIEAINHAKAAGVPIVVAINKIDKPEANPEKIKTQLSEAGVLVEEWGGENQCQEISAKKGTGIVELMEKVLTEAEVRELKGNYSKEVLASGVIVESELDKGKGVISTVLVQRGFLKVGDPFVAGNTMGKVRAIMDERGKRIQSAGPSRPVSVLGFEDLPQSGDVLTVMASDREARDLAQKRQVIRREHEFRRSTRVKLDSISRQIKEGLMKELSVIIKADTDGSIQALADGLMKIQNDEVKVQIIHQGVGQITETDVLLAAASDAIIIGFRVRPNVNAKRLAEKEDLDVRFYSVIYHVLEDVEKALEGMLSPELHEESLGSLEIRQVFKVPKVGNVGGCYVLDGKILRDAKVRLLRDGVQIYDGTLDTLRRFKDDVKEVDAGYECGVGLKNYDDIKVGDVVEAYRIVETKRKL</sequence>
<proteinExistence type="inferred from homology"/>
<reference key="1">
    <citation type="submission" date="2007-03" db="EMBL/GenBank/DDBJ databases">
        <title>Complete sequence of Prosthecochloris vibrioformis DSM 265.</title>
        <authorList>
            <consortium name="US DOE Joint Genome Institute"/>
            <person name="Copeland A."/>
            <person name="Lucas S."/>
            <person name="Lapidus A."/>
            <person name="Barry K."/>
            <person name="Detter J.C."/>
            <person name="Glavina del Rio T."/>
            <person name="Hammon N."/>
            <person name="Israni S."/>
            <person name="Pitluck S."/>
            <person name="Schmutz J."/>
            <person name="Larimer F."/>
            <person name="Land M."/>
            <person name="Hauser L."/>
            <person name="Mikhailova N."/>
            <person name="Li T."/>
            <person name="Overmann J."/>
            <person name="Schuster S.C."/>
            <person name="Bryant D.A."/>
            <person name="Richardson P."/>
        </authorList>
    </citation>
    <scope>NUCLEOTIDE SEQUENCE [LARGE SCALE GENOMIC DNA]</scope>
    <source>
        <strain>DSM 265 / 1930</strain>
    </source>
</reference>
<feature type="chain" id="PRO_1000075613" description="Translation initiation factor IF-2">
    <location>
        <begin position="1"/>
        <end position="900"/>
    </location>
</feature>
<feature type="domain" description="tr-type G">
    <location>
        <begin position="397"/>
        <end position="567"/>
    </location>
</feature>
<feature type="region of interest" description="Disordered" evidence="3">
    <location>
        <begin position="80"/>
        <end position="106"/>
    </location>
</feature>
<feature type="region of interest" description="Disordered" evidence="3">
    <location>
        <begin position="149"/>
        <end position="169"/>
    </location>
</feature>
<feature type="region of interest" description="Disordered" evidence="3">
    <location>
        <begin position="221"/>
        <end position="268"/>
    </location>
</feature>
<feature type="region of interest" description="G1" evidence="1">
    <location>
        <begin position="406"/>
        <end position="413"/>
    </location>
</feature>
<feature type="region of interest" description="G2" evidence="1">
    <location>
        <begin position="431"/>
        <end position="435"/>
    </location>
</feature>
<feature type="region of interest" description="G3" evidence="1">
    <location>
        <begin position="453"/>
        <end position="456"/>
    </location>
</feature>
<feature type="region of interest" description="G4" evidence="1">
    <location>
        <begin position="507"/>
        <end position="510"/>
    </location>
</feature>
<feature type="region of interest" description="G5" evidence="1">
    <location>
        <begin position="543"/>
        <end position="545"/>
    </location>
</feature>
<feature type="compositionally biased region" description="Basic and acidic residues" evidence="3">
    <location>
        <begin position="80"/>
        <end position="95"/>
    </location>
</feature>
<feature type="compositionally biased region" description="Basic residues" evidence="3">
    <location>
        <begin position="253"/>
        <end position="262"/>
    </location>
</feature>
<feature type="binding site" evidence="2">
    <location>
        <begin position="406"/>
        <end position="413"/>
    </location>
    <ligand>
        <name>GTP</name>
        <dbReference type="ChEBI" id="CHEBI:37565"/>
    </ligand>
</feature>
<feature type="binding site" evidence="2">
    <location>
        <begin position="453"/>
        <end position="457"/>
    </location>
    <ligand>
        <name>GTP</name>
        <dbReference type="ChEBI" id="CHEBI:37565"/>
    </ligand>
</feature>
<feature type="binding site" evidence="2">
    <location>
        <begin position="507"/>
        <end position="510"/>
    </location>
    <ligand>
        <name>GTP</name>
        <dbReference type="ChEBI" id="CHEBI:37565"/>
    </ligand>
</feature>
<name>IF2_CHLPM</name>
<comment type="function">
    <text evidence="2">One of the essential components for the initiation of protein synthesis. Protects formylmethionyl-tRNA from spontaneous hydrolysis and promotes its binding to the 30S ribosomal subunits. Also involved in the hydrolysis of GTP during the formation of the 70S ribosomal complex.</text>
</comment>
<comment type="subcellular location">
    <subcellularLocation>
        <location evidence="2">Cytoplasm</location>
    </subcellularLocation>
</comment>
<comment type="similarity">
    <text evidence="2">Belongs to the TRAFAC class translation factor GTPase superfamily. Classic translation factor GTPase family. IF-2 subfamily.</text>
</comment>